<proteinExistence type="inferred from homology"/>
<organism>
    <name type="scientific">Haemophilus influenzae (strain ATCC 51907 / DSM 11121 / KW20 / Rd)</name>
    <dbReference type="NCBI Taxonomy" id="71421"/>
    <lineage>
        <taxon>Bacteria</taxon>
        <taxon>Pseudomonadati</taxon>
        <taxon>Pseudomonadota</taxon>
        <taxon>Gammaproteobacteria</taxon>
        <taxon>Pasteurellales</taxon>
        <taxon>Pasteurellaceae</taxon>
        <taxon>Haemophilus</taxon>
    </lineage>
</organism>
<feature type="chain" id="PRO_0000175147" description="Ferrochelatase">
    <location>
        <begin position="1"/>
        <end position="323"/>
    </location>
</feature>
<feature type="binding site" evidence="1">
    <location>
        <position position="196"/>
    </location>
    <ligand>
        <name>Fe cation</name>
        <dbReference type="ChEBI" id="CHEBI:24875"/>
    </ligand>
</feature>
<feature type="binding site" evidence="1">
    <location>
        <position position="277"/>
    </location>
    <ligand>
        <name>Fe cation</name>
        <dbReference type="ChEBI" id="CHEBI:24875"/>
    </ligand>
</feature>
<accession>P43868</accession>
<comment type="function">
    <text evidence="1">Catalyzes the ferrous insertion into protoporphyrin IX.</text>
</comment>
<comment type="catalytic activity">
    <reaction evidence="1">
        <text>heme b + 2 H(+) = protoporphyrin IX + Fe(2+)</text>
        <dbReference type="Rhea" id="RHEA:22584"/>
        <dbReference type="ChEBI" id="CHEBI:15378"/>
        <dbReference type="ChEBI" id="CHEBI:29033"/>
        <dbReference type="ChEBI" id="CHEBI:57306"/>
        <dbReference type="ChEBI" id="CHEBI:60344"/>
        <dbReference type="EC" id="4.98.1.1"/>
    </reaction>
</comment>
<comment type="pathway">
    <text evidence="1">Porphyrin-containing compound metabolism; protoheme biosynthesis; protoheme from protoporphyrin-IX: step 1/1.</text>
</comment>
<comment type="subcellular location">
    <subcellularLocation>
        <location evidence="1">Cytoplasm</location>
    </subcellularLocation>
</comment>
<comment type="similarity">
    <text evidence="1 2">Belongs to the ferrochelatase family.</text>
</comment>
<keyword id="KW-0963">Cytoplasm</keyword>
<keyword id="KW-0350">Heme biosynthesis</keyword>
<keyword id="KW-0408">Iron</keyword>
<keyword id="KW-0456">Lyase</keyword>
<keyword id="KW-0479">Metal-binding</keyword>
<keyword id="KW-0627">Porphyrin biosynthesis</keyword>
<keyword id="KW-1185">Reference proteome</keyword>
<sequence length="323" mass="37089">MTKPAKIGVLLANLGTPDSPTPKSISRYLWQFLTDPRVVDLPRCKWYPLLKAIILPLRSKRIAKNYQAIWTEQGSPLLAISRQQKDALQAYLDNQNIDTQVEIAMTYGNPSMQSAVKNLLKNQVERIIVLPLYPQYSSSTTGAVFDAFANALKEERGLLPFDFIHSYHIDENYINALADSIKVRLKSDEFLLFSYHGIPLRYEKMGDYYREHCKQTTIAVVNKLGLTENQWRMTFQSRFGREEWLQPYTDKFLESAAAQNIQKIAVICPGFSVDCLETIEEIDEENRENFLNNGGQSYQYIPALNVEHAHIEMMGKLILEKLT</sequence>
<gene>
    <name evidence="1" type="primary">hemH</name>
    <name type="synonym">visA</name>
    <name type="ordered locus">HI_1160</name>
</gene>
<evidence type="ECO:0000255" key="1">
    <source>
        <dbReference type="HAMAP-Rule" id="MF_00323"/>
    </source>
</evidence>
<evidence type="ECO:0000305" key="2"/>
<reference key="1">
    <citation type="journal article" date="1995" name="Science">
        <title>Whole-genome random sequencing and assembly of Haemophilus influenzae Rd.</title>
        <authorList>
            <person name="Fleischmann R.D."/>
            <person name="Adams M.D."/>
            <person name="White O."/>
            <person name="Clayton R.A."/>
            <person name="Kirkness E.F."/>
            <person name="Kerlavage A.R."/>
            <person name="Bult C.J."/>
            <person name="Tomb J.-F."/>
            <person name="Dougherty B.A."/>
            <person name="Merrick J.M."/>
            <person name="McKenney K."/>
            <person name="Sutton G.G."/>
            <person name="FitzHugh W."/>
            <person name="Fields C.A."/>
            <person name="Gocayne J.D."/>
            <person name="Scott J.D."/>
            <person name="Shirley R."/>
            <person name="Liu L.-I."/>
            <person name="Glodek A."/>
            <person name="Kelley J.M."/>
            <person name="Weidman J.F."/>
            <person name="Phillips C.A."/>
            <person name="Spriggs T."/>
            <person name="Hedblom E."/>
            <person name="Cotton M.D."/>
            <person name="Utterback T.R."/>
            <person name="Hanna M.C."/>
            <person name="Nguyen D.T."/>
            <person name="Saudek D.M."/>
            <person name="Brandon R.C."/>
            <person name="Fine L.D."/>
            <person name="Fritchman J.L."/>
            <person name="Fuhrmann J.L."/>
            <person name="Geoghagen N.S.M."/>
            <person name="Gnehm C.L."/>
            <person name="McDonald L.A."/>
            <person name="Small K.V."/>
            <person name="Fraser C.M."/>
            <person name="Smith H.O."/>
            <person name="Venter J.C."/>
        </authorList>
    </citation>
    <scope>NUCLEOTIDE SEQUENCE [LARGE SCALE GENOMIC DNA]</scope>
    <source>
        <strain>ATCC 51907 / DSM 11121 / KW20 / Rd</strain>
    </source>
</reference>
<protein>
    <recommendedName>
        <fullName evidence="1">Ferrochelatase</fullName>
        <ecNumber evidence="1">4.98.1.1</ecNumber>
    </recommendedName>
    <alternativeName>
        <fullName evidence="1">Heme synthase</fullName>
    </alternativeName>
    <alternativeName>
        <fullName evidence="1">Protoheme ferro-lyase</fullName>
    </alternativeName>
</protein>
<name>HEMH_HAEIN</name>
<dbReference type="EC" id="4.98.1.1" evidence="1"/>
<dbReference type="EMBL" id="L42023">
    <property type="protein sequence ID" value="AAC22815.1"/>
    <property type="molecule type" value="Genomic_DNA"/>
</dbReference>
<dbReference type="PIR" id="I64186">
    <property type="entry name" value="I64186"/>
</dbReference>
<dbReference type="RefSeq" id="NP_439318.1">
    <property type="nucleotide sequence ID" value="NC_000907.1"/>
</dbReference>
<dbReference type="SMR" id="P43868"/>
<dbReference type="STRING" id="71421.HI_1160"/>
<dbReference type="DNASU" id="950120"/>
<dbReference type="EnsemblBacteria" id="AAC22815">
    <property type="protein sequence ID" value="AAC22815"/>
    <property type="gene ID" value="HI_1160"/>
</dbReference>
<dbReference type="KEGG" id="hin:HI_1160"/>
<dbReference type="PATRIC" id="fig|71421.8.peg.1212"/>
<dbReference type="eggNOG" id="COG0276">
    <property type="taxonomic scope" value="Bacteria"/>
</dbReference>
<dbReference type="HOGENOM" id="CLU_018884_0_0_6"/>
<dbReference type="OrthoDB" id="9809741at2"/>
<dbReference type="PhylomeDB" id="P43868"/>
<dbReference type="BioCyc" id="HINF71421:G1GJ1-1194-MONOMER"/>
<dbReference type="UniPathway" id="UPA00252">
    <property type="reaction ID" value="UER00325"/>
</dbReference>
<dbReference type="Proteomes" id="UP000000579">
    <property type="component" value="Chromosome"/>
</dbReference>
<dbReference type="GO" id="GO:0005737">
    <property type="term" value="C:cytoplasm"/>
    <property type="evidence" value="ECO:0007669"/>
    <property type="project" value="UniProtKB-SubCell"/>
</dbReference>
<dbReference type="GO" id="GO:0004325">
    <property type="term" value="F:ferrochelatase activity"/>
    <property type="evidence" value="ECO:0000318"/>
    <property type="project" value="GO_Central"/>
</dbReference>
<dbReference type="GO" id="GO:0046872">
    <property type="term" value="F:metal ion binding"/>
    <property type="evidence" value="ECO:0007669"/>
    <property type="project" value="UniProtKB-KW"/>
</dbReference>
<dbReference type="GO" id="GO:0006783">
    <property type="term" value="P:heme biosynthetic process"/>
    <property type="evidence" value="ECO:0000318"/>
    <property type="project" value="GO_Central"/>
</dbReference>
<dbReference type="CDD" id="cd00419">
    <property type="entry name" value="Ferrochelatase_C"/>
    <property type="match status" value="1"/>
</dbReference>
<dbReference type="CDD" id="cd03411">
    <property type="entry name" value="Ferrochelatase_N"/>
    <property type="match status" value="1"/>
</dbReference>
<dbReference type="FunFam" id="3.40.50.1400:FF:000002">
    <property type="entry name" value="Ferrochelatase"/>
    <property type="match status" value="1"/>
</dbReference>
<dbReference type="Gene3D" id="3.40.50.1400">
    <property type="match status" value="2"/>
</dbReference>
<dbReference type="HAMAP" id="MF_00323">
    <property type="entry name" value="Ferrochelatase"/>
    <property type="match status" value="1"/>
</dbReference>
<dbReference type="InterPro" id="IPR001015">
    <property type="entry name" value="Ferrochelatase"/>
</dbReference>
<dbReference type="InterPro" id="IPR019772">
    <property type="entry name" value="Ferrochelatase_AS"/>
</dbReference>
<dbReference type="InterPro" id="IPR033644">
    <property type="entry name" value="Ferrochelatase_C"/>
</dbReference>
<dbReference type="InterPro" id="IPR033659">
    <property type="entry name" value="Ferrochelatase_N"/>
</dbReference>
<dbReference type="NCBIfam" id="TIGR00109">
    <property type="entry name" value="hemH"/>
    <property type="match status" value="1"/>
</dbReference>
<dbReference type="PANTHER" id="PTHR11108">
    <property type="entry name" value="FERROCHELATASE"/>
    <property type="match status" value="1"/>
</dbReference>
<dbReference type="PANTHER" id="PTHR11108:SF1">
    <property type="entry name" value="FERROCHELATASE, MITOCHONDRIAL"/>
    <property type="match status" value="1"/>
</dbReference>
<dbReference type="Pfam" id="PF00762">
    <property type="entry name" value="Ferrochelatase"/>
    <property type="match status" value="1"/>
</dbReference>
<dbReference type="SUPFAM" id="SSF53800">
    <property type="entry name" value="Chelatase"/>
    <property type="match status" value="1"/>
</dbReference>
<dbReference type="PROSITE" id="PS00534">
    <property type="entry name" value="FERROCHELATASE"/>
    <property type="match status" value="1"/>
</dbReference>